<evidence type="ECO:0000255" key="1">
    <source>
        <dbReference type="HAMAP-Rule" id="MF_01170"/>
    </source>
</evidence>
<comment type="function">
    <text evidence="1">Required for the formation of axial filaments and for anchoring the origin regions at the cell poles in sporulating cells, thus ensuring proper chromosome segregation in the prespore. Binds in a dispersed manner throughout the chromosome but preferentially to sites clustered in the origin portion of the chromosome, causing condensation of the chromosome and its remodeling into an elongated, anchored structure.</text>
</comment>
<comment type="subcellular location">
    <subcellularLocation>
        <location evidence="1">Cytoplasm</location>
    </subcellularLocation>
    <text evidence="1">Localizes to cell poles and nucleoid.</text>
</comment>
<comment type="similarity">
    <text evidence="1">Belongs to the RacA family.</text>
</comment>
<sequence length="180" mass="21354">MEYKTPFIAKKLGVSPKAVVRIAQQLNLTIEKNKYGHFIFTQDDLDQMLEYHLSQIEKSQNTHPTQKTSSNDVEELKTQVNTIVQNISSHDFEQLTAQLNTITRRLDRMEEQMQDKANDVVTYQLLQHRREMEEMLERIQKLEATLKKEEPIYITPDTKPIYEREKKPKRRKMIFSIFGL</sequence>
<feature type="chain" id="PRO_1000137974" description="Chromosome-anchoring protein RacA">
    <location>
        <begin position="1"/>
        <end position="180"/>
    </location>
</feature>
<feature type="DNA-binding region" description="H-T-H motif" evidence="1">
    <location>
        <begin position="5"/>
        <end position="25"/>
    </location>
</feature>
<feature type="coiled-coil region" evidence="1">
    <location>
        <begin position="89"/>
        <end position="151"/>
    </location>
</feature>
<keyword id="KW-0131">Cell cycle</keyword>
<keyword id="KW-0132">Cell division</keyword>
<keyword id="KW-0159">Chromosome partition</keyword>
<keyword id="KW-0175">Coiled coil</keyword>
<keyword id="KW-0963">Cytoplasm</keyword>
<keyword id="KW-0238">DNA-binding</keyword>
<keyword id="KW-0749">Sporulation</keyword>
<accession>B7HQ80</accession>
<proteinExistence type="inferred from homology"/>
<organism>
    <name type="scientific">Bacillus cereus (strain AH187)</name>
    <dbReference type="NCBI Taxonomy" id="405534"/>
    <lineage>
        <taxon>Bacteria</taxon>
        <taxon>Bacillati</taxon>
        <taxon>Bacillota</taxon>
        <taxon>Bacilli</taxon>
        <taxon>Bacillales</taxon>
        <taxon>Bacillaceae</taxon>
        <taxon>Bacillus</taxon>
        <taxon>Bacillus cereus group</taxon>
    </lineage>
</organism>
<protein>
    <recommendedName>
        <fullName evidence="1">Chromosome-anchoring protein RacA</fullName>
    </recommendedName>
</protein>
<name>RACA_BACC7</name>
<dbReference type="EMBL" id="CP001177">
    <property type="protein sequence ID" value="ACJ78058.1"/>
    <property type="molecule type" value="Genomic_DNA"/>
</dbReference>
<dbReference type="SMR" id="B7HQ80"/>
<dbReference type="KEGG" id="bcr:BCAH187_A2396"/>
<dbReference type="HOGENOM" id="CLU_111022_0_0_9"/>
<dbReference type="Proteomes" id="UP000002214">
    <property type="component" value="Chromosome"/>
</dbReference>
<dbReference type="GO" id="GO:0005737">
    <property type="term" value="C:cytoplasm"/>
    <property type="evidence" value="ECO:0007669"/>
    <property type="project" value="UniProtKB-SubCell"/>
</dbReference>
<dbReference type="GO" id="GO:0003690">
    <property type="term" value="F:double-stranded DNA binding"/>
    <property type="evidence" value="ECO:0007669"/>
    <property type="project" value="UniProtKB-UniRule"/>
</dbReference>
<dbReference type="GO" id="GO:0008356">
    <property type="term" value="P:asymmetric cell division"/>
    <property type="evidence" value="ECO:0007669"/>
    <property type="project" value="UniProtKB-UniRule"/>
</dbReference>
<dbReference type="GO" id="GO:0030261">
    <property type="term" value="P:chromosome condensation"/>
    <property type="evidence" value="ECO:0007669"/>
    <property type="project" value="UniProtKB-UniRule"/>
</dbReference>
<dbReference type="GO" id="GO:0007059">
    <property type="term" value="P:chromosome segregation"/>
    <property type="evidence" value="ECO:0007669"/>
    <property type="project" value="UniProtKB-UniRule"/>
</dbReference>
<dbReference type="GO" id="GO:0030435">
    <property type="term" value="P:sporulation resulting in formation of a cellular spore"/>
    <property type="evidence" value="ECO:0007669"/>
    <property type="project" value="UniProtKB-UniRule"/>
</dbReference>
<dbReference type="Gene3D" id="1.10.1660.10">
    <property type="match status" value="1"/>
</dbReference>
<dbReference type="HAMAP" id="MF_01170">
    <property type="entry name" value="RacA"/>
    <property type="match status" value="1"/>
</dbReference>
<dbReference type="InterPro" id="IPR023522">
    <property type="entry name" value="Chrosome_anchoring_RacA"/>
</dbReference>
<dbReference type="NCBIfam" id="NF009646">
    <property type="entry name" value="PRK13182.1-1"/>
    <property type="match status" value="1"/>
</dbReference>
<dbReference type="SUPFAM" id="SSF58064">
    <property type="entry name" value="Influenza hemagglutinin (stalk)"/>
    <property type="match status" value="1"/>
</dbReference>
<reference key="1">
    <citation type="submission" date="2008-10" db="EMBL/GenBank/DDBJ databases">
        <title>Genome sequence of Bacillus cereus AH187.</title>
        <authorList>
            <person name="Dodson R.J."/>
            <person name="Durkin A.S."/>
            <person name="Rosovitz M.J."/>
            <person name="Rasko D.A."/>
            <person name="Kolsto A.B."/>
            <person name="Okstad O.A."/>
            <person name="Ravel J."/>
            <person name="Sutton G."/>
        </authorList>
    </citation>
    <scope>NUCLEOTIDE SEQUENCE [LARGE SCALE GENOMIC DNA]</scope>
    <source>
        <strain>AH187</strain>
    </source>
</reference>
<gene>
    <name evidence="1" type="primary">racA</name>
    <name type="ordered locus">BCAH187_A2396</name>
</gene>